<sequence length="105" mass="12154">MSALIRLASFARVGGRLFRSGRARTAGDGGVRHASGGVHLEPRYRQFPQLTRSQVFQSEFFSGLMWFWILWRFWHDSEEVLGHFPYPDPSKWTDEELGIPPDDED</sequence>
<name>NDUB2_PONPY</name>
<reference key="1">
    <citation type="journal article" date="2006" name="Gene">
        <title>Adaptive selection of mitochondrial complex I subunits during primate radiation.</title>
        <authorList>
            <person name="Mishmar D."/>
            <person name="Ruiz-Pesini E."/>
            <person name="Mondragon-Palomino M."/>
            <person name="Procaccio V."/>
            <person name="Gaut B."/>
            <person name="Wallace D.C."/>
        </authorList>
    </citation>
    <scope>NUCLEOTIDE SEQUENCE [MRNA]</scope>
</reference>
<accession>Q0MQC7</accession>
<feature type="transit peptide" description="Mitochondrion" evidence="1">
    <location>
        <begin position="1"/>
        <end position="33"/>
    </location>
</feature>
<feature type="chain" id="PRO_0000251827" description="NADH dehydrogenase [ubiquinone] 1 beta subcomplex subunit 2, mitochondrial">
    <location>
        <begin position="34"/>
        <end position="105"/>
    </location>
</feature>
<feature type="region of interest" description="Disordered" evidence="3">
    <location>
        <begin position="85"/>
        <end position="105"/>
    </location>
</feature>
<feature type="compositionally biased region" description="Acidic residues" evidence="3">
    <location>
        <begin position="95"/>
        <end position="105"/>
    </location>
</feature>
<dbReference type="EMBL" id="DQ885707">
    <property type="protein sequence ID" value="ABH12216.1"/>
    <property type="molecule type" value="mRNA"/>
</dbReference>
<dbReference type="SMR" id="Q0MQC7"/>
<dbReference type="GO" id="GO:0005743">
    <property type="term" value="C:mitochondrial inner membrane"/>
    <property type="evidence" value="ECO:0007669"/>
    <property type="project" value="UniProtKB-SubCell"/>
</dbReference>
<dbReference type="GO" id="GO:0045271">
    <property type="term" value="C:respiratory chain complex I"/>
    <property type="evidence" value="ECO:0000250"/>
    <property type="project" value="UniProtKB"/>
</dbReference>
<dbReference type="GO" id="GO:0032981">
    <property type="term" value="P:mitochondrial respiratory chain complex I assembly"/>
    <property type="evidence" value="ECO:0007669"/>
    <property type="project" value="TreeGrafter"/>
</dbReference>
<dbReference type="InterPro" id="IPR026627">
    <property type="entry name" value="NDUFB2_animal"/>
</dbReference>
<dbReference type="PANTHER" id="PTHR15223:SF1">
    <property type="entry name" value="NADH DEHYDROGENASE [UBIQUINONE] 1 BETA SUBCOMPLEX SUBUNIT 2, MITOCHONDRIAL"/>
    <property type="match status" value="1"/>
</dbReference>
<dbReference type="PANTHER" id="PTHR15223">
    <property type="entry name" value="NADH-UBIQUINONE OXIDOREDUCTASE AGGG SUBUNIT"/>
    <property type="match status" value="1"/>
</dbReference>
<dbReference type="Pfam" id="PF14813">
    <property type="entry name" value="NADH_B2"/>
    <property type="match status" value="1"/>
</dbReference>
<comment type="function">
    <text evidence="2">Accessory subunit of the mitochondrial membrane respiratory chain NADH dehydrogenase (Complex I), that is believed not to be involved in catalysis. Complex I functions in the transfer of electrons from NADH to the respiratory chain. The immediate electron acceptor for the enzyme is believed to be ubiquinone.</text>
</comment>
<comment type="subunit">
    <text evidence="2">Complex I is composed of 45 different subunits.</text>
</comment>
<comment type="subcellular location">
    <subcellularLocation>
        <location evidence="2">Mitochondrion inner membrane</location>
        <topology evidence="2">Peripheral membrane protein</topology>
        <orientation evidence="2">Matrix side</orientation>
    </subcellularLocation>
</comment>
<comment type="similarity">
    <text evidence="4">Belongs to the complex I NDUFB2 subunit family.</text>
</comment>
<evidence type="ECO:0000250" key="1"/>
<evidence type="ECO:0000250" key="2">
    <source>
        <dbReference type="UniProtKB" id="O95178"/>
    </source>
</evidence>
<evidence type="ECO:0000256" key="3">
    <source>
        <dbReference type="SAM" id="MobiDB-lite"/>
    </source>
</evidence>
<evidence type="ECO:0000305" key="4"/>
<organism>
    <name type="scientific">Pongo pygmaeus</name>
    <name type="common">Bornean orangutan</name>
    <dbReference type="NCBI Taxonomy" id="9600"/>
    <lineage>
        <taxon>Eukaryota</taxon>
        <taxon>Metazoa</taxon>
        <taxon>Chordata</taxon>
        <taxon>Craniata</taxon>
        <taxon>Vertebrata</taxon>
        <taxon>Euteleostomi</taxon>
        <taxon>Mammalia</taxon>
        <taxon>Eutheria</taxon>
        <taxon>Euarchontoglires</taxon>
        <taxon>Primates</taxon>
        <taxon>Haplorrhini</taxon>
        <taxon>Catarrhini</taxon>
        <taxon>Hominidae</taxon>
        <taxon>Pongo</taxon>
    </lineage>
</organism>
<protein>
    <recommendedName>
        <fullName>NADH dehydrogenase [ubiquinone] 1 beta subcomplex subunit 2, mitochondrial</fullName>
    </recommendedName>
    <alternativeName>
        <fullName>Complex I-AGGG</fullName>
        <shortName>CI-AGGG</shortName>
    </alternativeName>
    <alternativeName>
        <fullName>NADH-ubiquinone oxidoreductase AGGG subunit</fullName>
    </alternativeName>
</protein>
<keyword id="KW-0249">Electron transport</keyword>
<keyword id="KW-0472">Membrane</keyword>
<keyword id="KW-0496">Mitochondrion</keyword>
<keyword id="KW-0999">Mitochondrion inner membrane</keyword>
<keyword id="KW-0679">Respiratory chain</keyword>
<keyword id="KW-0809">Transit peptide</keyword>
<keyword id="KW-0813">Transport</keyword>
<gene>
    <name type="primary">NDUFB2</name>
</gene>
<proteinExistence type="inferred from homology"/>